<proteinExistence type="inferred from homology"/>
<sequence>MRFTNPLLFPPPVPPEPPDRNSPVTPPRGPVPVPLPPGKGRHGGLDGGRRGSPEGQEDEEDSDEEEAENYPPSRSRPRRGRRRLHNKWDQNINYEPPAAPEDDWEDFCKKLTIPQFLF</sequence>
<organismHost>
    <name type="scientific">Canis lupus familiaris</name>
    <name type="common">Dog</name>
    <name type="synonym">Canis familiaris</name>
    <dbReference type="NCBI Taxonomy" id="9615"/>
</organismHost>
<organism>
    <name type="scientific">Canine oral papillomavirus (strain Y62)</name>
    <name type="common">COPV</name>
    <dbReference type="NCBI Taxonomy" id="766192"/>
    <lineage>
        <taxon>Viruses</taxon>
        <taxon>Monodnaviria</taxon>
        <taxon>Shotokuvirae</taxon>
        <taxon>Cossaviricota</taxon>
        <taxon>Papovaviricetes</taxon>
        <taxon>Zurhausenvirales</taxon>
        <taxon>Papillomaviridae</taxon>
        <taxon>Firstpapillomavirinae</taxon>
        <taxon>Lambdapapillomavirus</taxon>
        <taxon>Canine oral papillomavirus</taxon>
    </lineage>
</organism>
<name>VE4_COPV6</name>
<reference key="1">
    <citation type="journal article" date="1994" name="Virology">
        <title>Canine oral papillomavirus genomic sequence: a unique 1.5-kb intervening sequence between the E2 and L2 open reading frames.</title>
        <authorList>
            <person name="Delius H."/>
            <person name="van Ranst M.A."/>
            <person name="Jenson A.B."/>
            <person name="zur Hausen H."/>
            <person name="Sundberg J.P."/>
        </authorList>
    </citation>
    <scope>NUCLEOTIDE SEQUENCE [GENOMIC DNA]</scope>
</reference>
<reference key="2">
    <citation type="journal article" date="1995" name="Int. J. Oncol.">
        <title>Nucleotide sequence of canine oral papillomavirus containing a long noncoding region.</title>
        <authorList>
            <person name="Isegawa N."/>
            <person name="Ohta M."/>
            <person name="Shirasawa H."/>
            <person name="Tokita H."/>
            <person name="Simizu B."/>
            <person name="Yamaura A."/>
        </authorList>
    </citation>
    <scope>NUCLEOTIDE SEQUENCE [GENOMIC DNA]</scope>
</reference>
<dbReference type="EMBL" id="D55633">
    <property type="protein sequence ID" value="BAA18879.1"/>
    <property type="molecule type" value="Genomic_DNA"/>
</dbReference>
<dbReference type="RefSeq" id="NP_056817.2">
    <property type="nucleotide sequence ID" value="NC_001619.1"/>
</dbReference>
<dbReference type="SMR" id="Q84240"/>
<dbReference type="GeneID" id="1497242"/>
<dbReference type="KEGG" id="vg:1497242"/>
<dbReference type="Proteomes" id="UP000008788">
    <property type="component" value="Segment"/>
</dbReference>
<keyword id="KW-0244">Early protein</keyword>
<keyword id="KW-1185">Reference proteome</keyword>
<protein>
    <recommendedName>
        <fullName>Probable protein E4</fullName>
    </recommendedName>
</protein>
<gene>
    <name type="primary">E4</name>
</gene>
<evidence type="ECO:0000256" key="1">
    <source>
        <dbReference type="SAM" id="MobiDB-lite"/>
    </source>
</evidence>
<evidence type="ECO:0000305" key="2"/>
<accession>Q84240</accession>
<feature type="chain" id="PRO_0000395842" description="Probable protein E4">
    <location>
        <begin position="1"/>
        <end position="118"/>
    </location>
</feature>
<feature type="region of interest" description="Disordered" evidence="1">
    <location>
        <begin position="1"/>
        <end position="103"/>
    </location>
</feature>
<feature type="compositionally biased region" description="Pro residues" evidence="1">
    <location>
        <begin position="24"/>
        <end position="37"/>
    </location>
</feature>
<feature type="compositionally biased region" description="Basic and acidic residues" evidence="1">
    <location>
        <begin position="43"/>
        <end position="52"/>
    </location>
</feature>
<feature type="compositionally biased region" description="Acidic residues" evidence="1">
    <location>
        <begin position="55"/>
        <end position="68"/>
    </location>
</feature>
<feature type="compositionally biased region" description="Basic residues" evidence="1">
    <location>
        <begin position="75"/>
        <end position="85"/>
    </location>
</feature>
<comment type="similarity">
    <text evidence="2">Belongs to the papillomaviridae E4 protein family.</text>
</comment>